<name>F16PA_NITEU</name>
<dbReference type="EC" id="3.1.3.11" evidence="1"/>
<dbReference type="EMBL" id="AL954747">
    <property type="protein sequence ID" value="CAD84432.1"/>
    <property type="molecule type" value="Genomic_DNA"/>
</dbReference>
<dbReference type="RefSeq" id="WP_011111151.1">
    <property type="nucleotide sequence ID" value="NC_004757.1"/>
</dbReference>
<dbReference type="SMR" id="Q82WY3"/>
<dbReference type="STRING" id="228410.NE0521"/>
<dbReference type="GeneID" id="87103724"/>
<dbReference type="KEGG" id="neu:NE0521"/>
<dbReference type="eggNOG" id="COG0158">
    <property type="taxonomic scope" value="Bacteria"/>
</dbReference>
<dbReference type="HOGENOM" id="CLU_039977_0_0_4"/>
<dbReference type="OrthoDB" id="9806756at2"/>
<dbReference type="PhylomeDB" id="Q82WY3"/>
<dbReference type="UniPathway" id="UPA00138"/>
<dbReference type="Proteomes" id="UP000001416">
    <property type="component" value="Chromosome"/>
</dbReference>
<dbReference type="GO" id="GO:0005829">
    <property type="term" value="C:cytosol"/>
    <property type="evidence" value="ECO:0007669"/>
    <property type="project" value="TreeGrafter"/>
</dbReference>
<dbReference type="GO" id="GO:0042132">
    <property type="term" value="F:fructose 1,6-bisphosphate 1-phosphatase activity"/>
    <property type="evidence" value="ECO:0007669"/>
    <property type="project" value="UniProtKB-UniRule"/>
</dbReference>
<dbReference type="GO" id="GO:0000287">
    <property type="term" value="F:magnesium ion binding"/>
    <property type="evidence" value="ECO:0007669"/>
    <property type="project" value="UniProtKB-UniRule"/>
</dbReference>
<dbReference type="GO" id="GO:0030388">
    <property type="term" value="P:fructose 1,6-bisphosphate metabolic process"/>
    <property type="evidence" value="ECO:0007669"/>
    <property type="project" value="TreeGrafter"/>
</dbReference>
<dbReference type="GO" id="GO:0006002">
    <property type="term" value="P:fructose 6-phosphate metabolic process"/>
    <property type="evidence" value="ECO:0007669"/>
    <property type="project" value="TreeGrafter"/>
</dbReference>
<dbReference type="GO" id="GO:0006000">
    <property type="term" value="P:fructose metabolic process"/>
    <property type="evidence" value="ECO:0007669"/>
    <property type="project" value="TreeGrafter"/>
</dbReference>
<dbReference type="GO" id="GO:0006094">
    <property type="term" value="P:gluconeogenesis"/>
    <property type="evidence" value="ECO:0007669"/>
    <property type="project" value="UniProtKB-UniRule"/>
</dbReference>
<dbReference type="GO" id="GO:0005986">
    <property type="term" value="P:sucrose biosynthetic process"/>
    <property type="evidence" value="ECO:0007669"/>
    <property type="project" value="TreeGrafter"/>
</dbReference>
<dbReference type="CDD" id="cd00354">
    <property type="entry name" value="FBPase"/>
    <property type="match status" value="1"/>
</dbReference>
<dbReference type="FunFam" id="3.30.540.10:FF:000002">
    <property type="entry name" value="Fructose-1,6-bisphosphatase class 1"/>
    <property type="match status" value="1"/>
</dbReference>
<dbReference type="FunFam" id="3.40.190.80:FF:000011">
    <property type="entry name" value="Fructose-1,6-bisphosphatase class 1"/>
    <property type="match status" value="1"/>
</dbReference>
<dbReference type="Gene3D" id="3.40.190.80">
    <property type="match status" value="1"/>
</dbReference>
<dbReference type="Gene3D" id="3.30.540.10">
    <property type="entry name" value="Fructose-1,6-Bisphosphatase, subunit A, domain 1"/>
    <property type="match status" value="1"/>
</dbReference>
<dbReference type="HAMAP" id="MF_01855">
    <property type="entry name" value="FBPase_class1"/>
    <property type="match status" value="1"/>
</dbReference>
<dbReference type="InterPro" id="IPR044015">
    <property type="entry name" value="FBPase_C_dom"/>
</dbReference>
<dbReference type="InterPro" id="IPR000146">
    <property type="entry name" value="FBPase_class-1"/>
</dbReference>
<dbReference type="InterPro" id="IPR033391">
    <property type="entry name" value="FBPase_N"/>
</dbReference>
<dbReference type="InterPro" id="IPR028343">
    <property type="entry name" value="FBPtase"/>
</dbReference>
<dbReference type="NCBIfam" id="NF006778">
    <property type="entry name" value="PRK09293.1-1"/>
    <property type="match status" value="1"/>
</dbReference>
<dbReference type="NCBIfam" id="NF006779">
    <property type="entry name" value="PRK09293.1-3"/>
    <property type="match status" value="1"/>
</dbReference>
<dbReference type="NCBIfam" id="NF006780">
    <property type="entry name" value="PRK09293.1-4"/>
    <property type="match status" value="1"/>
</dbReference>
<dbReference type="PANTHER" id="PTHR11556">
    <property type="entry name" value="FRUCTOSE-1,6-BISPHOSPHATASE-RELATED"/>
    <property type="match status" value="1"/>
</dbReference>
<dbReference type="PANTHER" id="PTHR11556:SF35">
    <property type="entry name" value="SEDOHEPTULOSE-1,7-BISPHOSPHATASE, CHLOROPLASTIC"/>
    <property type="match status" value="1"/>
</dbReference>
<dbReference type="Pfam" id="PF00316">
    <property type="entry name" value="FBPase"/>
    <property type="match status" value="1"/>
</dbReference>
<dbReference type="Pfam" id="PF18913">
    <property type="entry name" value="FBPase_C"/>
    <property type="match status" value="1"/>
</dbReference>
<dbReference type="PIRSF" id="PIRSF500210">
    <property type="entry name" value="FBPtase"/>
    <property type="match status" value="1"/>
</dbReference>
<dbReference type="PIRSF" id="PIRSF000904">
    <property type="entry name" value="FBPtase_SBPase"/>
    <property type="match status" value="1"/>
</dbReference>
<dbReference type="PRINTS" id="PR00115">
    <property type="entry name" value="F16BPHPHTASE"/>
</dbReference>
<dbReference type="SUPFAM" id="SSF56655">
    <property type="entry name" value="Carbohydrate phosphatase"/>
    <property type="match status" value="1"/>
</dbReference>
<organism>
    <name type="scientific">Nitrosomonas europaea (strain ATCC 19718 / CIP 103999 / KCTC 2705 / NBRC 14298)</name>
    <dbReference type="NCBI Taxonomy" id="228410"/>
    <lineage>
        <taxon>Bacteria</taxon>
        <taxon>Pseudomonadati</taxon>
        <taxon>Pseudomonadota</taxon>
        <taxon>Betaproteobacteria</taxon>
        <taxon>Nitrosomonadales</taxon>
        <taxon>Nitrosomonadaceae</taxon>
        <taxon>Nitrosomonas</taxon>
    </lineage>
</organism>
<comment type="catalytic activity">
    <reaction evidence="1">
        <text>beta-D-fructose 1,6-bisphosphate + H2O = beta-D-fructose 6-phosphate + phosphate</text>
        <dbReference type="Rhea" id="RHEA:11064"/>
        <dbReference type="ChEBI" id="CHEBI:15377"/>
        <dbReference type="ChEBI" id="CHEBI:32966"/>
        <dbReference type="ChEBI" id="CHEBI:43474"/>
        <dbReference type="ChEBI" id="CHEBI:57634"/>
        <dbReference type="EC" id="3.1.3.11"/>
    </reaction>
</comment>
<comment type="cofactor">
    <cofactor evidence="1">
        <name>Mg(2+)</name>
        <dbReference type="ChEBI" id="CHEBI:18420"/>
    </cofactor>
    <text evidence="1">Binds 2 magnesium ions per subunit.</text>
</comment>
<comment type="pathway">
    <text evidence="1">Carbohydrate biosynthesis; gluconeogenesis.</text>
</comment>
<comment type="subunit">
    <text evidence="1">Homotetramer.</text>
</comment>
<comment type="subcellular location">
    <subcellularLocation>
        <location evidence="1">Cytoplasm</location>
    </subcellularLocation>
</comment>
<comment type="similarity">
    <text evidence="1">Belongs to the FBPase class 1 family.</text>
</comment>
<accession>Q82WY3</accession>
<feature type="chain" id="PRO_0000364616" description="Fructose-1,6-bisphosphatase class 1">
    <location>
        <begin position="1"/>
        <end position="334"/>
    </location>
</feature>
<feature type="binding site" evidence="1">
    <location>
        <position position="92"/>
    </location>
    <ligand>
        <name>Mg(2+)</name>
        <dbReference type="ChEBI" id="CHEBI:18420"/>
        <label>1</label>
    </ligand>
</feature>
<feature type="binding site" evidence="1">
    <location>
        <position position="114"/>
    </location>
    <ligand>
        <name>Mg(2+)</name>
        <dbReference type="ChEBI" id="CHEBI:18420"/>
        <label>1</label>
    </ligand>
</feature>
<feature type="binding site" evidence="1">
    <location>
        <position position="114"/>
    </location>
    <ligand>
        <name>Mg(2+)</name>
        <dbReference type="ChEBI" id="CHEBI:18420"/>
        <label>2</label>
    </ligand>
</feature>
<feature type="binding site" evidence="1">
    <location>
        <position position="116"/>
    </location>
    <ligand>
        <name>Mg(2+)</name>
        <dbReference type="ChEBI" id="CHEBI:18420"/>
        <label>1</label>
    </ligand>
</feature>
<feature type="binding site" evidence="1">
    <location>
        <begin position="117"/>
        <end position="120"/>
    </location>
    <ligand>
        <name>substrate</name>
    </ligand>
</feature>
<feature type="binding site" evidence="1">
    <location>
        <position position="117"/>
    </location>
    <ligand>
        <name>Mg(2+)</name>
        <dbReference type="ChEBI" id="CHEBI:18420"/>
        <label>2</label>
    </ligand>
</feature>
<feature type="binding site" evidence="1">
    <location>
        <position position="209"/>
    </location>
    <ligand>
        <name>substrate</name>
    </ligand>
</feature>
<feature type="binding site" evidence="1">
    <location>
        <position position="281"/>
    </location>
    <ligand>
        <name>Mg(2+)</name>
        <dbReference type="ChEBI" id="CHEBI:18420"/>
        <label>2</label>
    </ligand>
</feature>
<gene>
    <name evidence="1" type="primary">fbp</name>
    <name type="ordered locus">NE0521</name>
</gene>
<protein>
    <recommendedName>
        <fullName evidence="1">Fructose-1,6-bisphosphatase class 1</fullName>
        <shortName evidence="1">FBPase class 1</shortName>
        <ecNumber evidence="1">3.1.3.11</ecNumber>
    </recommendedName>
    <alternativeName>
        <fullName evidence="1">D-fructose-1,6-bisphosphate 1-phosphohydrolase class 1</fullName>
    </alternativeName>
</protein>
<sequence>MHTGTTLTQFIIEEQRHIAGASGDFTALLNDIVTAIKTISNAVNKGALIGVMGALDTENVQGETQKKLDVITNEIMIRNNEWAGHLSGMASEEMDDVYSIPSPYPLGKYLLVFDPLDGSSNVDLNISVGTIFSILRSPVPSRAASMEDFLQPGVKQVCAGYALYGSSTMLVLTTGHGVNGFTLDRDIGEFVLTHPNMRIPADTREFAINASNQRFWEAPVQRYVAECLAGSTGPRGRDFNMRWVASMVAEVHRILTRGGIFMYPRDTKDPSKPGRLRLMYEANPMSFIVEQAGGLSTTGYERILDVVPQDLHQRVPVILGSKNEVEVVLEYHNA</sequence>
<evidence type="ECO:0000255" key="1">
    <source>
        <dbReference type="HAMAP-Rule" id="MF_01855"/>
    </source>
</evidence>
<keyword id="KW-0119">Carbohydrate metabolism</keyword>
<keyword id="KW-0963">Cytoplasm</keyword>
<keyword id="KW-0378">Hydrolase</keyword>
<keyword id="KW-0460">Magnesium</keyword>
<keyword id="KW-0479">Metal-binding</keyword>
<keyword id="KW-1185">Reference proteome</keyword>
<proteinExistence type="inferred from homology"/>
<reference key="1">
    <citation type="journal article" date="2003" name="J. Bacteriol.">
        <title>Complete genome sequence of the ammonia-oxidizing bacterium and obligate chemolithoautotroph Nitrosomonas europaea.</title>
        <authorList>
            <person name="Chain P."/>
            <person name="Lamerdin J.E."/>
            <person name="Larimer F.W."/>
            <person name="Regala W."/>
            <person name="Lao V."/>
            <person name="Land M.L."/>
            <person name="Hauser L."/>
            <person name="Hooper A.B."/>
            <person name="Klotz M.G."/>
            <person name="Norton J."/>
            <person name="Sayavedra-Soto L.A."/>
            <person name="Arciero D.M."/>
            <person name="Hommes N.G."/>
            <person name="Whittaker M.M."/>
            <person name="Arp D.J."/>
        </authorList>
    </citation>
    <scope>NUCLEOTIDE SEQUENCE [LARGE SCALE GENOMIC DNA]</scope>
    <source>
        <strain>ATCC 19718 / CIP 103999 / KCTC 2705 / NBRC 14298</strain>
    </source>
</reference>